<reference key="1">
    <citation type="submission" date="2006-12" db="EMBL/GenBank/DDBJ databases">
        <title>Bifidobacterium adolescentis complete genome sequence.</title>
        <authorList>
            <person name="Suzuki T."/>
            <person name="Tsuda Y."/>
            <person name="Kanou N."/>
            <person name="Inoue T."/>
            <person name="Kumazaki K."/>
            <person name="Nagano S."/>
            <person name="Hirai S."/>
            <person name="Tanaka K."/>
            <person name="Watanabe K."/>
        </authorList>
    </citation>
    <scope>NUCLEOTIDE SEQUENCE [LARGE SCALE GENOMIC DNA]</scope>
    <source>
        <strain>ATCC 15703 / DSM 20083 / NCTC 11814 / E194a</strain>
    </source>
</reference>
<organism>
    <name type="scientific">Bifidobacterium adolescentis (strain ATCC 15703 / DSM 20083 / NCTC 11814 / E194a)</name>
    <dbReference type="NCBI Taxonomy" id="367928"/>
    <lineage>
        <taxon>Bacteria</taxon>
        <taxon>Bacillati</taxon>
        <taxon>Actinomycetota</taxon>
        <taxon>Actinomycetes</taxon>
        <taxon>Bifidobacteriales</taxon>
        <taxon>Bifidobacteriaceae</taxon>
        <taxon>Bifidobacterium</taxon>
    </lineage>
</organism>
<keyword id="KW-1185">Reference proteome</keyword>
<keyword id="KW-0687">Ribonucleoprotein</keyword>
<keyword id="KW-0689">Ribosomal protein</keyword>
<proteinExistence type="inferred from homology"/>
<comment type="similarity">
    <text evidence="1">Belongs to the universal ribosomal protein uS9 family.</text>
</comment>
<gene>
    <name evidence="1" type="primary">rpsI</name>
    <name type="ordered locus">BAD_0310</name>
</gene>
<sequence>MAENTNDSAVLETEEELTSYTTETNAGAGTGTSTIAPGYGTGRRKEAVARVRLVPGTGKWTINGRTLEEYFPAKLLQREVNSPIVLLKLEGKFDAIVLVDGGGTTGQAGAIRLGVARALNAIDRDANRAALKKAGFLTRDARVVERKKAGLHKARRAPQFSKR</sequence>
<name>RS9_BIFAA</name>
<feature type="chain" id="PRO_1000051170" description="Small ribosomal subunit protein uS9">
    <location>
        <begin position="1"/>
        <end position="163"/>
    </location>
</feature>
<feature type="region of interest" description="Disordered" evidence="2">
    <location>
        <begin position="1"/>
        <end position="41"/>
    </location>
</feature>
<feature type="compositionally biased region" description="Low complexity" evidence="2">
    <location>
        <begin position="18"/>
        <end position="38"/>
    </location>
</feature>
<accession>A1A058</accession>
<evidence type="ECO:0000255" key="1">
    <source>
        <dbReference type="HAMAP-Rule" id="MF_00532"/>
    </source>
</evidence>
<evidence type="ECO:0000256" key="2">
    <source>
        <dbReference type="SAM" id="MobiDB-lite"/>
    </source>
</evidence>
<evidence type="ECO:0000305" key="3"/>
<protein>
    <recommendedName>
        <fullName evidence="1">Small ribosomal subunit protein uS9</fullName>
    </recommendedName>
    <alternativeName>
        <fullName evidence="3">30S ribosomal protein S9</fullName>
    </alternativeName>
</protein>
<dbReference type="EMBL" id="AP009256">
    <property type="protein sequence ID" value="BAF39091.1"/>
    <property type="molecule type" value="Genomic_DNA"/>
</dbReference>
<dbReference type="RefSeq" id="WP_003807930.1">
    <property type="nucleotide sequence ID" value="NZ_CAXVNC010000001.1"/>
</dbReference>
<dbReference type="SMR" id="A1A058"/>
<dbReference type="STRING" id="367928.BAD_0310"/>
<dbReference type="PaxDb" id="1680-BADO_0319"/>
<dbReference type="GeneID" id="4556655"/>
<dbReference type="KEGG" id="bad:BAD_0310"/>
<dbReference type="HOGENOM" id="CLU_046483_2_0_11"/>
<dbReference type="Proteomes" id="UP000008702">
    <property type="component" value="Chromosome"/>
</dbReference>
<dbReference type="GO" id="GO:0005737">
    <property type="term" value="C:cytoplasm"/>
    <property type="evidence" value="ECO:0007669"/>
    <property type="project" value="UniProtKB-ARBA"/>
</dbReference>
<dbReference type="GO" id="GO:0015935">
    <property type="term" value="C:small ribosomal subunit"/>
    <property type="evidence" value="ECO:0007669"/>
    <property type="project" value="TreeGrafter"/>
</dbReference>
<dbReference type="GO" id="GO:0003723">
    <property type="term" value="F:RNA binding"/>
    <property type="evidence" value="ECO:0007669"/>
    <property type="project" value="TreeGrafter"/>
</dbReference>
<dbReference type="GO" id="GO:0003735">
    <property type="term" value="F:structural constituent of ribosome"/>
    <property type="evidence" value="ECO:0007669"/>
    <property type="project" value="InterPro"/>
</dbReference>
<dbReference type="GO" id="GO:0006412">
    <property type="term" value="P:translation"/>
    <property type="evidence" value="ECO:0007669"/>
    <property type="project" value="UniProtKB-UniRule"/>
</dbReference>
<dbReference type="FunFam" id="3.30.230.10:FF:000001">
    <property type="entry name" value="30S ribosomal protein S9"/>
    <property type="match status" value="1"/>
</dbReference>
<dbReference type="Gene3D" id="3.30.230.10">
    <property type="match status" value="1"/>
</dbReference>
<dbReference type="HAMAP" id="MF_00532_B">
    <property type="entry name" value="Ribosomal_uS9_B"/>
    <property type="match status" value="1"/>
</dbReference>
<dbReference type="InterPro" id="IPR020568">
    <property type="entry name" value="Ribosomal_Su5_D2-typ_SF"/>
</dbReference>
<dbReference type="InterPro" id="IPR000754">
    <property type="entry name" value="Ribosomal_uS9"/>
</dbReference>
<dbReference type="InterPro" id="IPR023035">
    <property type="entry name" value="Ribosomal_uS9_bac/plastid"/>
</dbReference>
<dbReference type="InterPro" id="IPR020574">
    <property type="entry name" value="Ribosomal_uS9_CS"/>
</dbReference>
<dbReference type="InterPro" id="IPR014721">
    <property type="entry name" value="Ribsml_uS5_D2-typ_fold_subgr"/>
</dbReference>
<dbReference type="NCBIfam" id="NF001099">
    <property type="entry name" value="PRK00132.1"/>
    <property type="match status" value="1"/>
</dbReference>
<dbReference type="PANTHER" id="PTHR21569">
    <property type="entry name" value="RIBOSOMAL PROTEIN S9"/>
    <property type="match status" value="1"/>
</dbReference>
<dbReference type="PANTHER" id="PTHR21569:SF1">
    <property type="entry name" value="SMALL RIBOSOMAL SUBUNIT PROTEIN US9M"/>
    <property type="match status" value="1"/>
</dbReference>
<dbReference type="Pfam" id="PF00380">
    <property type="entry name" value="Ribosomal_S9"/>
    <property type="match status" value="1"/>
</dbReference>
<dbReference type="SUPFAM" id="SSF54211">
    <property type="entry name" value="Ribosomal protein S5 domain 2-like"/>
    <property type="match status" value="1"/>
</dbReference>
<dbReference type="PROSITE" id="PS00360">
    <property type="entry name" value="RIBOSOMAL_S9"/>
    <property type="match status" value="1"/>
</dbReference>